<organism>
    <name type="scientific">Macaca fuscata fuscata</name>
    <name type="common">Japanese macaque</name>
    <dbReference type="NCBI Taxonomy" id="9543"/>
    <lineage>
        <taxon>Eukaryota</taxon>
        <taxon>Metazoa</taxon>
        <taxon>Chordata</taxon>
        <taxon>Craniata</taxon>
        <taxon>Vertebrata</taxon>
        <taxon>Euteleostomi</taxon>
        <taxon>Mammalia</taxon>
        <taxon>Eutheria</taxon>
        <taxon>Euarchontoglires</taxon>
        <taxon>Primates</taxon>
        <taxon>Haplorrhini</taxon>
        <taxon>Catarrhini</taxon>
        <taxon>Cercopithecidae</taxon>
        <taxon>Cercopithecinae</taxon>
        <taxon>Macaca</taxon>
    </lineage>
</organism>
<gene>
    <name type="primary">PTGDS</name>
</gene>
<comment type="function">
    <text evidence="1 2 3">Catalyzes the conversion of PGH2 to PGD2, a prostaglandin involved in smooth muscle contraction/relaxation and a potent inhibitor of platelet aggregation. Involved in a variety of CNS functions, such as sedation, NREM sleep and PGE2-induced allodynia, and may have an anti-apoptotic role in oligodendrocytes. Binds small non-substrate lipophilic molecules, including biliverdin, bilirubin, retinal, retinoic acid and thyroid hormone, and may act as a scavenger for harmful hydrophobic molecules and as a secretory retinoid and thyroid hormone transporter. Possibly involved in development and maintenance of the blood-brain, blood-retina, blood-aqueous humor and blood-testis barrier. It is likely to play important roles in both maturation and maintenance of the central nervous system and male reproductive system (By similarity). Involved in PLA2G3-dependent maturation of mast cells. PLA2G3 is secreted by immature mast cells and acts on nearby fibroblasts upstream to PTDGS to synthesize PGD2, which in turn promotes mast cell maturation and degranulation via PTGDR (By similarity).</text>
</comment>
<comment type="catalytic activity">
    <reaction evidence="3">
        <text>prostaglandin H2 = prostaglandin D2</text>
        <dbReference type="Rhea" id="RHEA:10600"/>
        <dbReference type="ChEBI" id="CHEBI:57405"/>
        <dbReference type="ChEBI" id="CHEBI:57406"/>
        <dbReference type="EC" id="5.3.99.2"/>
    </reaction>
</comment>
<comment type="subunit">
    <text evidence="3">Monomer.</text>
</comment>
<comment type="subcellular location">
    <subcellularLocation>
        <location evidence="3">Rough endoplasmic reticulum</location>
    </subcellularLocation>
    <subcellularLocation>
        <location evidence="3">Nucleus membrane</location>
    </subcellularLocation>
    <subcellularLocation>
        <location evidence="3">Golgi apparatus</location>
    </subcellularLocation>
    <subcellularLocation>
        <location evidence="3">Cytoplasm</location>
        <location evidence="3">Perinuclear region</location>
    </subcellularLocation>
    <subcellularLocation>
        <location evidence="3">Secreted</location>
    </subcellularLocation>
    <text evidence="3">Detected on rough endoplasmic reticulum of arachnoid and menigioma cells. Localized to the nuclear envelope, Golgi apparatus, secretory vesicles and spherical cytoplasmic structures in arachnoid trabecular cells, and to circular cytoplasmic structures in meningeal macrophages and perivascular microglial cells. In oligodendrocytes, localized to the rough endoplasmic reticulum and nuclear envelope. In retinal pigment epithelial cells, localized to distinct cytoplasmic domains including the perinuclear region. Also secreted.</text>
</comment>
<comment type="domain">
    <text evidence="3">Forms a beta-barrel structure that accommodates hydrophobic ligands in its interior.</text>
</comment>
<comment type="similarity">
    <text evidence="5">Belongs to the calycin superfamily. Lipocalin family.</text>
</comment>
<feature type="signal peptide" evidence="3">
    <location>
        <begin position="1"/>
        <end position="22"/>
    </location>
</feature>
<feature type="chain" id="PRO_0000017946" description="Prostaglandin-H2 D-isomerase">
    <location>
        <begin position="23"/>
        <end position="190"/>
    </location>
</feature>
<feature type="active site" description="Nucleophile" evidence="3">
    <location>
        <position position="65"/>
    </location>
</feature>
<feature type="glycosylation site" description="N-linked (GlcNAc...) asparagine" evidence="4">
    <location>
        <position position="51"/>
    </location>
</feature>
<feature type="glycosylation site" description="N-linked (GlcNAc...) asparagine" evidence="4">
    <location>
        <position position="78"/>
    </location>
</feature>
<feature type="disulfide bond" evidence="2">
    <location>
        <begin position="89"/>
        <end position="186"/>
    </location>
</feature>
<dbReference type="EC" id="5.3.99.2" evidence="3"/>
<dbReference type="EMBL" id="AB032480">
    <property type="protein sequence ID" value="BAA86198.1"/>
    <property type="molecule type" value="mRNA"/>
</dbReference>
<dbReference type="SMR" id="Q9TUI1"/>
<dbReference type="GlyCosmos" id="Q9TUI1">
    <property type="glycosylation" value="2 sites, No reported glycans"/>
</dbReference>
<dbReference type="GO" id="GO:0005576">
    <property type="term" value="C:extracellular region"/>
    <property type="evidence" value="ECO:0000250"/>
    <property type="project" value="UniProtKB"/>
</dbReference>
<dbReference type="GO" id="GO:0005615">
    <property type="term" value="C:extracellular space"/>
    <property type="evidence" value="ECO:0000250"/>
    <property type="project" value="UniProtKB"/>
</dbReference>
<dbReference type="GO" id="GO:0005794">
    <property type="term" value="C:Golgi apparatus"/>
    <property type="evidence" value="ECO:0007669"/>
    <property type="project" value="UniProtKB-SubCell"/>
</dbReference>
<dbReference type="GO" id="GO:0031965">
    <property type="term" value="C:nuclear membrane"/>
    <property type="evidence" value="ECO:0007669"/>
    <property type="project" value="UniProtKB-SubCell"/>
</dbReference>
<dbReference type="GO" id="GO:0048471">
    <property type="term" value="C:perinuclear region of cytoplasm"/>
    <property type="evidence" value="ECO:0007669"/>
    <property type="project" value="UniProtKB-SubCell"/>
</dbReference>
<dbReference type="GO" id="GO:0005791">
    <property type="term" value="C:rough endoplasmic reticulum"/>
    <property type="evidence" value="ECO:0000250"/>
    <property type="project" value="UniProtKB"/>
</dbReference>
<dbReference type="GO" id="GO:0004667">
    <property type="term" value="F:prostaglandin-D synthase activity"/>
    <property type="evidence" value="ECO:0000250"/>
    <property type="project" value="UniProtKB"/>
</dbReference>
<dbReference type="GO" id="GO:0005501">
    <property type="term" value="F:retinoid binding"/>
    <property type="evidence" value="ECO:0000250"/>
    <property type="project" value="UniProtKB"/>
</dbReference>
<dbReference type="GO" id="GO:0036094">
    <property type="term" value="F:small molecule binding"/>
    <property type="evidence" value="ECO:0007669"/>
    <property type="project" value="InterPro"/>
</dbReference>
<dbReference type="GO" id="GO:0043303">
    <property type="term" value="P:mast cell degranulation"/>
    <property type="evidence" value="ECO:0007669"/>
    <property type="project" value="UniProtKB-KW"/>
</dbReference>
<dbReference type="GO" id="GO:0001516">
    <property type="term" value="P:prostaglandin biosynthetic process"/>
    <property type="evidence" value="ECO:0000250"/>
    <property type="project" value="UniProtKB"/>
</dbReference>
<dbReference type="CDD" id="cd19419">
    <property type="entry name" value="lipocalin_L-PGDS"/>
    <property type="match status" value="1"/>
</dbReference>
<dbReference type="FunFam" id="2.40.128.20:FF:000010">
    <property type="entry name" value="Prostaglandin-H2 D-isomerase"/>
    <property type="match status" value="1"/>
</dbReference>
<dbReference type="Gene3D" id="2.40.128.20">
    <property type="match status" value="1"/>
</dbReference>
<dbReference type="InterPro" id="IPR012674">
    <property type="entry name" value="Calycin"/>
</dbReference>
<dbReference type="InterPro" id="IPR002345">
    <property type="entry name" value="Lipocalin"/>
</dbReference>
<dbReference type="InterPro" id="IPR022272">
    <property type="entry name" value="Lipocalin_CS"/>
</dbReference>
<dbReference type="InterPro" id="IPR000566">
    <property type="entry name" value="Lipocln_cytosolic_FA-bd_dom"/>
</dbReference>
<dbReference type="PANTHER" id="PTHR11430">
    <property type="entry name" value="LIPOCALIN"/>
    <property type="match status" value="1"/>
</dbReference>
<dbReference type="PANTHER" id="PTHR11430:SF86">
    <property type="entry name" value="PROSTAGLANDIN-H2 D-ISOMERASE"/>
    <property type="match status" value="1"/>
</dbReference>
<dbReference type="Pfam" id="PF00061">
    <property type="entry name" value="Lipocalin"/>
    <property type="match status" value="1"/>
</dbReference>
<dbReference type="PRINTS" id="PR00179">
    <property type="entry name" value="LIPOCALIN"/>
</dbReference>
<dbReference type="PRINTS" id="PR01254">
    <property type="entry name" value="PGNDSYNTHASE"/>
</dbReference>
<dbReference type="SUPFAM" id="SSF50814">
    <property type="entry name" value="Lipocalins"/>
    <property type="match status" value="1"/>
</dbReference>
<dbReference type="PROSITE" id="PS00213">
    <property type="entry name" value="LIPOCALIN"/>
    <property type="match status" value="1"/>
</dbReference>
<name>PTGDS_MACFU</name>
<sequence>MATHHTLWMGLVLLGLLGGLQAAPEAQVSVQPNFQPDKFLGRWFSAGLASNSSWLQEKKAALSMCKSVVAPATDGGLNLTSTFLRKNQCETRTMLLQPGESLGSYSYGSPHWGSTYSVSVVETDYDHYALLYSQGSKGPGEDFRMATLYSRTQTPRAELKEKFSAFCKAQGFTEDSIVFLPQTDKCMTEQ</sequence>
<keyword id="KW-0963">Cytoplasm</keyword>
<keyword id="KW-1015">Disulfide bond</keyword>
<keyword id="KW-0256">Endoplasmic reticulum</keyword>
<keyword id="KW-0275">Fatty acid biosynthesis</keyword>
<keyword id="KW-0276">Fatty acid metabolism</keyword>
<keyword id="KW-0325">Glycoprotein</keyword>
<keyword id="KW-0333">Golgi apparatus</keyword>
<keyword id="KW-0413">Isomerase</keyword>
<keyword id="KW-0444">Lipid biosynthesis</keyword>
<keyword id="KW-0443">Lipid metabolism</keyword>
<keyword id="KW-0467">Mast cell degranulation</keyword>
<keyword id="KW-0472">Membrane</keyword>
<keyword id="KW-0539">Nucleus</keyword>
<keyword id="KW-0643">Prostaglandin biosynthesis</keyword>
<keyword id="KW-0644">Prostaglandin metabolism</keyword>
<keyword id="KW-0964">Secreted</keyword>
<keyword id="KW-0732">Signal</keyword>
<keyword id="KW-0813">Transport</keyword>
<proteinExistence type="evidence at transcript level"/>
<protein>
    <recommendedName>
        <fullName>Prostaglandin-H2 D-isomerase</fullName>
        <ecNumber evidence="3">5.3.99.2</ecNumber>
    </recommendedName>
    <alternativeName>
        <fullName>Glutathione-independent PGD synthase</fullName>
    </alternativeName>
    <alternativeName>
        <fullName>Lipocalin-type prostaglandin-D synthase</fullName>
    </alternativeName>
    <alternativeName>
        <fullName>Prostaglandin-D2 synthase</fullName>
        <shortName>PGD2 synthase</shortName>
        <shortName>PGDS</shortName>
        <shortName>PGDS2</shortName>
    </alternativeName>
</protein>
<reference key="1">
    <citation type="submission" date="1999-09" db="EMBL/GenBank/DDBJ databases">
        <title>Isolation of the cDNA for monkey prostaglandin D synthase.</title>
        <authorList>
            <person name="Fujimori K."/>
        </authorList>
    </citation>
    <scope>NUCLEOTIDE SEQUENCE [MRNA]</scope>
    <source>
        <tissue>Brain</tissue>
    </source>
</reference>
<evidence type="ECO:0000250" key="1"/>
<evidence type="ECO:0000250" key="2">
    <source>
        <dbReference type="UniProtKB" id="O09114"/>
    </source>
</evidence>
<evidence type="ECO:0000250" key="3">
    <source>
        <dbReference type="UniProtKB" id="P41222"/>
    </source>
</evidence>
<evidence type="ECO:0000255" key="4"/>
<evidence type="ECO:0000305" key="5"/>
<accession>Q9TUI1</accession>